<dbReference type="EC" id="6.3.1.13" evidence="1"/>
<dbReference type="EMBL" id="AM420293">
    <property type="protein sequence ID" value="CAM01531.1"/>
    <property type="molecule type" value="Genomic_DNA"/>
</dbReference>
<dbReference type="RefSeq" id="WP_011873605.1">
    <property type="nucleotide sequence ID" value="NC_009142.1"/>
</dbReference>
<dbReference type="SMR" id="A4FBV6"/>
<dbReference type="STRING" id="405948.SACE_2226"/>
<dbReference type="KEGG" id="sen:SACE_2226"/>
<dbReference type="eggNOG" id="COG0215">
    <property type="taxonomic scope" value="Bacteria"/>
</dbReference>
<dbReference type="HOGENOM" id="CLU_013528_0_0_11"/>
<dbReference type="OrthoDB" id="9815130at2"/>
<dbReference type="Proteomes" id="UP000006728">
    <property type="component" value="Chromosome"/>
</dbReference>
<dbReference type="GO" id="GO:0005829">
    <property type="term" value="C:cytosol"/>
    <property type="evidence" value="ECO:0007669"/>
    <property type="project" value="TreeGrafter"/>
</dbReference>
<dbReference type="GO" id="GO:0005524">
    <property type="term" value="F:ATP binding"/>
    <property type="evidence" value="ECO:0007669"/>
    <property type="project" value="UniProtKB-KW"/>
</dbReference>
<dbReference type="GO" id="GO:0035446">
    <property type="term" value="F:cysteine-glucosaminylinositol ligase activity"/>
    <property type="evidence" value="ECO:0007669"/>
    <property type="project" value="UniProtKB-UniRule"/>
</dbReference>
<dbReference type="GO" id="GO:0004817">
    <property type="term" value="F:cysteine-tRNA ligase activity"/>
    <property type="evidence" value="ECO:0007669"/>
    <property type="project" value="TreeGrafter"/>
</dbReference>
<dbReference type="GO" id="GO:0008270">
    <property type="term" value="F:zinc ion binding"/>
    <property type="evidence" value="ECO:0007669"/>
    <property type="project" value="UniProtKB-UniRule"/>
</dbReference>
<dbReference type="GO" id="GO:0006423">
    <property type="term" value="P:cysteinyl-tRNA aminoacylation"/>
    <property type="evidence" value="ECO:0007669"/>
    <property type="project" value="TreeGrafter"/>
</dbReference>
<dbReference type="GO" id="GO:0010125">
    <property type="term" value="P:mycothiol biosynthetic process"/>
    <property type="evidence" value="ECO:0007669"/>
    <property type="project" value="UniProtKB-UniRule"/>
</dbReference>
<dbReference type="CDD" id="cd00672">
    <property type="entry name" value="CysRS_core"/>
    <property type="match status" value="1"/>
</dbReference>
<dbReference type="FunFam" id="3.40.50.620:FF:000134">
    <property type="entry name" value="L-cysteine:1D-myo-inositol 2-amino-2-deoxy-alpha-D-glucopyranoside ligase"/>
    <property type="match status" value="1"/>
</dbReference>
<dbReference type="Gene3D" id="1.20.120.640">
    <property type="entry name" value="Anticodon-binding domain of a subclass of class I aminoacyl-tRNA synthetases"/>
    <property type="match status" value="1"/>
</dbReference>
<dbReference type="Gene3D" id="3.40.50.620">
    <property type="entry name" value="HUPs"/>
    <property type="match status" value="1"/>
</dbReference>
<dbReference type="HAMAP" id="MF_01697">
    <property type="entry name" value="MshC"/>
    <property type="match status" value="1"/>
</dbReference>
<dbReference type="InterPro" id="IPR024909">
    <property type="entry name" value="Cys-tRNA/MSH_ligase"/>
</dbReference>
<dbReference type="InterPro" id="IPR017812">
    <property type="entry name" value="Mycothiol_ligase_MshC"/>
</dbReference>
<dbReference type="InterPro" id="IPR014729">
    <property type="entry name" value="Rossmann-like_a/b/a_fold"/>
</dbReference>
<dbReference type="InterPro" id="IPR032678">
    <property type="entry name" value="tRNA-synt_1_cat_dom"/>
</dbReference>
<dbReference type="NCBIfam" id="TIGR03447">
    <property type="entry name" value="mycothiol_MshC"/>
    <property type="match status" value="1"/>
</dbReference>
<dbReference type="PANTHER" id="PTHR10890:SF3">
    <property type="entry name" value="CYSTEINE--TRNA LIGASE, CYTOPLASMIC"/>
    <property type="match status" value="1"/>
</dbReference>
<dbReference type="PANTHER" id="PTHR10890">
    <property type="entry name" value="CYSTEINYL-TRNA SYNTHETASE"/>
    <property type="match status" value="1"/>
</dbReference>
<dbReference type="Pfam" id="PF01406">
    <property type="entry name" value="tRNA-synt_1e"/>
    <property type="match status" value="1"/>
</dbReference>
<dbReference type="PRINTS" id="PR00983">
    <property type="entry name" value="TRNASYNTHCYS"/>
</dbReference>
<dbReference type="SUPFAM" id="SSF52374">
    <property type="entry name" value="Nucleotidylyl transferase"/>
    <property type="match status" value="1"/>
</dbReference>
<reference key="1">
    <citation type="journal article" date="2007" name="Nat. Biotechnol.">
        <title>Complete genome sequence of the erythromycin-producing bacterium Saccharopolyspora erythraea NRRL23338.</title>
        <authorList>
            <person name="Oliynyk M."/>
            <person name="Samborskyy M."/>
            <person name="Lester J.B."/>
            <person name="Mironenko T."/>
            <person name="Scott N."/>
            <person name="Dickens S."/>
            <person name="Haydock S.F."/>
            <person name="Leadlay P.F."/>
        </authorList>
    </citation>
    <scope>NUCLEOTIDE SEQUENCE [LARGE SCALE GENOMIC DNA]</scope>
    <source>
        <strain>ATCC 11635 / DSM 40517 / JCM 4748 / NBRC 13426 / NCIMB 8594 / NRRL 2338</strain>
    </source>
</reference>
<comment type="function">
    <text evidence="1">Catalyzes the ATP-dependent condensation of GlcN-Ins and L-cysteine to form L-Cys-GlcN-Ins.</text>
</comment>
<comment type="catalytic activity">
    <reaction evidence="1">
        <text>1D-myo-inositol 2-amino-2-deoxy-alpha-D-glucopyranoside + L-cysteine + ATP = 1D-myo-inositol 2-(L-cysteinylamino)-2-deoxy-alpha-D-glucopyranoside + AMP + diphosphate + H(+)</text>
        <dbReference type="Rhea" id="RHEA:26176"/>
        <dbReference type="ChEBI" id="CHEBI:15378"/>
        <dbReference type="ChEBI" id="CHEBI:30616"/>
        <dbReference type="ChEBI" id="CHEBI:33019"/>
        <dbReference type="ChEBI" id="CHEBI:35235"/>
        <dbReference type="ChEBI" id="CHEBI:58886"/>
        <dbReference type="ChEBI" id="CHEBI:58887"/>
        <dbReference type="ChEBI" id="CHEBI:456215"/>
        <dbReference type="EC" id="6.3.1.13"/>
    </reaction>
</comment>
<comment type="cofactor">
    <cofactor evidence="1">
        <name>Zn(2+)</name>
        <dbReference type="ChEBI" id="CHEBI:29105"/>
    </cofactor>
    <text evidence="1">Binds 1 zinc ion per subunit.</text>
</comment>
<comment type="subunit">
    <text evidence="1">Monomer.</text>
</comment>
<comment type="similarity">
    <text evidence="1">Belongs to the class-I aminoacyl-tRNA synthetase family. MshC subfamily.</text>
</comment>
<proteinExistence type="inferred from homology"/>
<accession>A4FBV6</accession>
<name>MSHC_SACEN</name>
<organism>
    <name type="scientific">Saccharopolyspora erythraea (strain ATCC 11635 / DSM 40517 / JCM 4748 / NBRC 13426 / NCIMB 8594 / NRRL 2338)</name>
    <dbReference type="NCBI Taxonomy" id="405948"/>
    <lineage>
        <taxon>Bacteria</taxon>
        <taxon>Bacillati</taxon>
        <taxon>Actinomycetota</taxon>
        <taxon>Actinomycetes</taxon>
        <taxon>Pseudonocardiales</taxon>
        <taxon>Pseudonocardiaceae</taxon>
        <taxon>Saccharopolyspora</taxon>
    </lineage>
</organism>
<feature type="chain" id="PRO_0000400480" description="L-cysteine:1D-myo-inositol 2-amino-2-deoxy-alpha-D-glucopyranoside ligase">
    <location>
        <begin position="1"/>
        <end position="412"/>
    </location>
</feature>
<feature type="short sequence motif" description="'HIGH' region" evidence="1">
    <location>
        <begin position="45"/>
        <end position="55"/>
    </location>
</feature>
<feature type="short sequence motif" description="'ERGGDP' region" evidence="1">
    <location>
        <begin position="187"/>
        <end position="192"/>
    </location>
</feature>
<feature type="short sequence motif" description="'KMSKS' region" evidence="1">
    <location>
        <begin position="289"/>
        <end position="293"/>
    </location>
</feature>
<feature type="binding site" evidence="1">
    <location>
        <begin position="43"/>
        <end position="46"/>
    </location>
    <ligand>
        <name>L-cysteinyl-5'-AMP</name>
        <dbReference type="ChEBI" id="CHEBI:144924"/>
    </ligand>
</feature>
<feature type="binding site" evidence="1">
    <location>
        <position position="43"/>
    </location>
    <ligand>
        <name>Zn(2+)</name>
        <dbReference type="ChEBI" id="CHEBI:29105"/>
    </ligand>
</feature>
<feature type="binding site" evidence="1">
    <location>
        <position position="58"/>
    </location>
    <ligand>
        <name>L-cysteinyl-5'-AMP</name>
        <dbReference type="ChEBI" id="CHEBI:144924"/>
    </ligand>
</feature>
<feature type="binding site" evidence="1">
    <location>
        <begin position="81"/>
        <end position="83"/>
    </location>
    <ligand>
        <name>L-cysteinyl-5'-AMP</name>
        <dbReference type="ChEBI" id="CHEBI:144924"/>
    </ligand>
</feature>
<feature type="binding site" evidence="1">
    <location>
        <position position="227"/>
    </location>
    <ligand>
        <name>L-cysteinyl-5'-AMP</name>
        <dbReference type="ChEBI" id="CHEBI:144924"/>
    </ligand>
</feature>
<feature type="binding site" evidence="1">
    <location>
        <position position="231"/>
    </location>
    <ligand>
        <name>Zn(2+)</name>
        <dbReference type="ChEBI" id="CHEBI:29105"/>
    </ligand>
</feature>
<feature type="binding site" evidence="1">
    <location>
        <begin position="249"/>
        <end position="251"/>
    </location>
    <ligand>
        <name>L-cysteinyl-5'-AMP</name>
        <dbReference type="ChEBI" id="CHEBI:144924"/>
    </ligand>
</feature>
<feature type="binding site" evidence="1">
    <location>
        <position position="256"/>
    </location>
    <ligand>
        <name>Zn(2+)</name>
        <dbReference type="ChEBI" id="CHEBI:29105"/>
    </ligand>
</feature>
<feature type="binding site" evidence="1">
    <location>
        <position position="283"/>
    </location>
    <ligand>
        <name>L-cysteinyl-5'-AMP</name>
        <dbReference type="ChEBI" id="CHEBI:144924"/>
    </ligand>
</feature>
<gene>
    <name evidence="1" type="primary">mshC</name>
    <name type="ordered locus">SACE_2226</name>
</gene>
<protein>
    <recommendedName>
        <fullName evidence="1">L-cysteine:1D-myo-inositol 2-amino-2-deoxy-alpha-D-glucopyranoside ligase</fullName>
        <shortName evidence="1">L-Cys:GlcN-Ins ligase</shortName>
        <ecNumber evidence="1">6.3.1.13</ecNumber>
    </recommendedName>
    <alternativeName>
        <fullName evidence="1">Mycothiol ligase</fullName>
        <shortName evidence="1">MSH ligase</shortName>
    </alternativeName>
</protein>
<keyword id="KW-0067">ATP-binding</keyword>
<keyword id="KW-0436">Ligase</keyword>
<keyword id="KW-0479">Metal-binding</keyword>
<keyword id="KW-0547">Nucleotide-binding</keyword>
<keyword id="KW-1185">Reference proteome</keyword>
<keyword id="KW-0862">Zinc</keyword>
<sequence>MQPWSSVPVPKVPGTARPLRLFDTAAGEVRPVTAGRTARMYVCGITPYDATHLGHAATYLAFDLVHRIWLDNGHDVHYVQNVTDIDDPLLERANRDNEDWVVLAMRETALFREDMEALRVVPPTDFIGAVESIPEIEEAVGKLLASGAAYRVDDDEYPDVYFRHSATGRFGYESNYDEATMLDLSAERGGDPDRKGKEHPLDALLWRMARDGEPSWESELGPGRPGWHLECSVIALNRLGMGFDVQGGGSDLAFPHHEFSAAHAEALAGDHPFARHYCHAGMIGLDGEKMSKSKGNLVFVSRLRGDRVDPMAIRLALLDGHYRSDRSWTADALTKGSARLARWREAVALEAGPSAEPVVERLRDRLSDDLDTERALLAVDAWVDEALCRRGGDAEAPAAIRDAVDGLLGVQL</sequence>
<evidence type="ECO:0000255" key="1">
    <source>
        <dbReference type="HAMAP-Rule" id="MF_01697"/>
    </source>
</evidence>